<feature type="chain" id="PRO_0000074756" description="Signal transduction histidine-protein kinase/phosphatase DegS">
    <location>
        <begin position="1"/>
        <end position="385"/>
    </location>
</feature>
<feature type="domain" description="Histidine kinase" evidence="2">
    <location>
        <begin position="183"/>
        <end position="385"/>
    </location>
</feature>
<feature type="coiled-coil region" evidence="1">
    <location>
        <begin position="31"/>
        <end position="141"/>
    </location>
</feature>
<feature type="modified residue" description="Phosphoserine" evidence="5 10">
    <location>
        <position position="76"/>
    </location>
</feature>
<feature type="modified residue" description="Phosphohistidine; by autocatalysis" evidence="2">
    <location>
        <position position="189"/>
    </location>
</feature>
<feature type="mutagenesis site" description="Lack of phosphorylation by YbdM." evidence="10">
    <original>S</original>
    <variation>A</variation>
    <location>
        <position position="76"/>
    </location>
</feature>
<feature type="mutagenesis site" description="Shows increased phosphorylation, as well as increased autophosphorylation and phosphotransfer to DegU. Negatively affects competence development." evidence="10">
    <original>S</original>
    <variation>D</variation>
    <location>
        <position position="76"/>
    </location>
</feature>
<feature type="mutagenesis site" description="Retains its autophosphorylation activity, but cannot phosphorylate DegU." evidence="4">
    <original>A</original>
    <variation>V</variation>
    <location>
        <position position="193"/>
    </location>
</feature>
<feature type="mutagenesis site" description="Retains its autophosphorylation activity, but shows a decrease in DegU phosphorylation activity. Decreases the rate of dephosphorylation of DegU." evidence="4 8">
    <original>G</original>
    <variation>E</variation>
    <location>
        <position position="218"/>
    </location>
</feature>
<name>DEGS_BACSU</name>
<gene>
    <name type="primary">degS</name>
    <name type="synonym">sacU</name>
    <name type="ordered locus">BSU35500</name>
</gene>
<proteinExistence type="evidence at protein level"/>
<organism>
    <name type="scientific">Bacillus subtilis (strain 168)</name>
    <dbReference type="NCBI Taxonomy" id="224308"/>
    <lineage>
        <taxon>Bacteria</taxon>
        <taxon>Bacillati</taxon>
        <taxon>Bacillota</taxon>
        <taxon>Bacilli</taxon>
        <taxon>Bacillales</taxon>
        <taxon>Bacillaceae</taxon>
        <taxon>Bacillus</taxon>
    </lineage>
</organism>
<protein>
    <recommendedName>
        <fullName>Signal transduction histidine-protein kinase/phosphatase DegS</fullName>
        <ecNumber>2.7.13.3</ecNumber>
        <ecNumber>3.1.3.-</ecNumber>
    </recommendedName>
</protein>
<accession>P13799</accession>
<accession>P19590</accession>
<sequence>MNKTKMDSKVLDSILMKMLKTVDGSKDEVFQIGEQSRQQYEQLVEELKQIKQQVYEVIELGDKLEVQTRHARNRLSEVSRNFHRFSEEEIRNAYEKAHKLQVELTMIQQREKQLRERRDDLERRLLGLQEIIERSESLVSQITVVLNYLNQDLREVGLLLADAQAKQDFGLRIIEAQEEERKRVSREIHDGPAQMLANVMMRSELIERIFRDRGAEDGFQEIKNLRQNVRNALYEVRRIIYDLRPMALDDLGLIPTLRKYLYTTEEYNGKVKIHFQCIGETEDQRLAPQFEVALFRLAQEAVSNALKHSESEEITVKVEITKDFVILMIKDNGKGFDLKEAKEKKNKSFGLLGMKERVDLLEGTMTIDSKIGLGTFIMIKVPLSL</sequence>
<keyword id="KW-0067">ATP-binding</keyword>
<keyword id="KW-0175">Coiled coil</keyword>
<keyword id="KW-0963">Cytoplasm</keyword>
<keyword id="KW-0378">Hydrolase</keyword>
<keyword id="KW-0418">Kinase</keyword>
<keyword id="KW-0547">Nucleotide-binding</keyword>
<keyword id="KW-0597">Phosphoprotein</keyword>
<keyword id="KW-0904">Protein phosphatase</keyword>
<keyword id="KW-1185">Reference proteome</keyword>
<keyword id="KW-0808">Transferase</keyword>
<keyword id="KW-0902">Two-component regulatory system</keyword>
<evidence type="ECO:0000255" key="1"/>
<evidence type="ECO:0000255" key="2">
    <source>
        <dbReference type="PROSITE-ProRule" id="PRU00107"/>
    </source>
</evidence>
<evidence type="ECO:0000269" key="3">
    <source>
    </source>
</evidence>
<evidence type="ECO:0000269" key="4">
    <source>
    </source>
</evidence>
<evidence type="ECO:0000269" key="5">
    <source>
    </source>
</evidence>
<evidence type="ECO:0000269" key="6">
    <source>
    </source>
</evidence>
<evidence type="ECO:0000269" key="7">
    <source>
    </source>
</evidence>
<evidence type="ECO:0000269" key="8">
    <source>
    </source>
</evidence>
<evidence type="ECO:0000269" key="9">
    <source>
    </source>
</evidence>
<evidence type="ECO:0000269" key="10">
    <source>
    </source>
</evidence>
<evidence type="ECO:0000305" key="11"/>
<dbReference type="EC" id="2.7.13.3"/>
<dbReference type="EC" id="3.1.3.-"/>
<dbReference type="EMBL" id="M23558">
    <property type="protein sequence ID" value="AAA22732.1"/>
    <property type="molecule type" value="Genomic_DNA"/>
</dbReference>
<dbReference type="EMBL" id="M23649">
    <property type="protein sequence ID" value="AAA22734.1"/>
    <property type="molecule type" value="Genomic_DNA"/>
</dbReference>
<dbReference type="EMBL" id="U56901">
    <property type="protein sequence ID" value="AAC44937.1"/>
    <property type="molecule type" value="Genomic_DNA"/>
</dbReference>
<dbReference type="EMBL" id="AL009126">
    <property type="protein sequence ID" value="CAB15567.1"/>
    <property type="molecule type" value="Genomic_DNA"/>
</dbReference>
<dbReference type="EMBL" id="M21658">
    <property type="protein sequence ID" value="AAA22544.1"/>
    <property type="molecule type" value="Genomic_DNA"/>
</dbReference>
<dbReference type="PIR" id="B30191">
    <property type="entry name" value="RGBSDS"/>
</dbReference>
<dbReference type="RefSeq" id="NP_391430.1">
    <property type="nucleotide sequence ID" value="NC_000964.3"/>
</dbReference>
<dbReference type="RefSeq" id="WP_003227983.1">
    <property type="nucleotide sequence ID" value="NZ_OZ025638.1"/>
</dbReference>
<dbReference type="SMR" id="P13799"/>
<dbReference type="FunCoup" id="P13799">
    <property type="interactions" value="139"/>
</dbReference>
<dbReference type="IntAct" id="P13799">
    <property type="interactions" value="6"/>
</dbReference>
<dbReference type="STRING" id="224308.BSU35500"/>
<dbReference type="iPTMnet" id="P13799"/>
<dbReference type="jPOST" id="P13799"/>
<dbReference type="PaxDb" id="224308-BSU35500"/>
<dbReference type="DNASU" id="936752"/>
<dbReference type="EnsemblBacteria" id="CAB15567">
    <property type="protein sequence ID" value="CAB15567"/>
    <property type="gene ID" value="BSU_35500"/>
</dbReference>
<dbReference type="GeneID" id="936752"/>
<dbReference type="KEGG" id="bsu:BSU35500"/>
<dbReference type="PATRIC" id="fig|224308.179.peg.3841"/>
<dbReference type="eggNOG" id="COG4585">
    <property type="taxonomic scope" value="Bacteria"/>
</dbReference>
<dbReference type="InParanoid" id="P13799"/>
<dbReference type="OrthoDB" id="9781904at2"/>
<dbReference type="PhylomeDB" id="P13799"/>
<dbReference type="BioCyc" id="BSUB:BSU35500-MONOMER"/>
<dbReference type="BRENDA" id="2.7.13.3">
    <property type="organism ID" value="658"/>
</dbReference>
<dbReference type="Proteomes" id="UP000001570">
    <property type="component" value="Chromosome"/>
</dbReference>
<dbReference type="GO" id="GO:0005737">
    <property type="term" value="C:cytoplasm"/>
    <property type="evidence" value="ECO:0007669"/>
    <property type="project" value="UniProtKB-SubCell"/>
</dbReference>
<dbReference type="GO" id="GO:0005886">
    <property type="term" value="C:plasma membrane"/>
    <property type="evidence" value="ECO:0000318"/>
    <property type="project" value="GO_Central"/>
</dbReference>
<dbReference type="GO" id="GO:0005524">
    <property type="term" value="F:ATP binding"/>
    <property type="evidence" value="ECO:0007669"/>
    <property type="project" value="UniProtKB-KW"/>
</dbReference>
<dbReference type="GO" id="GO:0004721">
    <property type="term" value="F:phosphoprotein phosphatase activity"/>
    <property type="evidence" value="ECO:0007669"/>
    <property type="project" value="UniProtKB-KW"/>
</dbReference>
<dbReference type="GO" id="GO:0000155">
    <property type="term" value="F:phosphorelay sensor kinase activity"/>
    <property type="evidence" value="ECO:0007669"/>
    <property type="project" value="InterPro"/>
</dbReference>
<dbReference type="GO" id="GO:0046983">
    <property type="term" value="F:protein dimerization activity"/>
    <property type="evidence" value="ECO:0007669"/>
    <property type="project" value="InterPro"/>
</dbReference>
<dbReference type="GO" id="GO:0004672">
    <property type="term" value="F:protein kinase activity"/>
    <property type="evidence" value="ECO:0000318"/>
    <property type="project" value="GO_Central"/>
</dbReference>
<dbReference type="CDD" id="cd16917">
    <property type="entry name" value="HATPase_UhpB-NarQ-NarX-like"/>
    <property type="match status" value="1"/>
</dbReference>
<dbReference type="Gene3D" id="1.20.5.1930">
    <property type="match status" value="1"/>
</dbReference>
<dbReference type="Gene3D" id="3.30.565.10">
    <property type="entry name" value="Histidine kinase-like ATPase, C-terminal domain"/>
    <property type="match status" value="1"/>
</dbReference>
<dbReference type="InterPro" id="IPR008595">
    <property type="entry name" value="DegS"/>
</dbReference>
<dbReference type="InterPro" id="IPR036890">
    <property type="entry name" value="HATPase_C_sf"/>
</dbReference>
<dbReference type="InterPro" id="IPR005467">
    <property type="entry name" value="His_kinase_dom"/>
</dbReference>
<dbReference type="InterPro" id="IPR050482">
    <property type="entry name" value="Sensor_HK_TwoCompSys"/>
</dbReference>
<dbReference type="InterPro" id="IPR011712">
    <property type="entry name" value="Sig_transdc_His_kin_sub3_dim/P"/>
</dbReference>
<dbReference type="InterPro" id="IPR016381">
    <property type="entry name" value="Sig_transdc_His_kinase_DegS"/>
</dbReference>
<dbReference type="PANTHER" id="PTHR24421">
    <property type="entry name" value="NITRATE/NITRITE SENSOR PROTEIN NARX-RELATED"/>
    <property type="match status" value="1"/>
</dbReference>
<dbReference type="PANTHER" id="PTHR24421:SF55">
    <property type="entry name" value="SENSOR HISTIDINE KINASE YDFH"/>
    <property type="match status" value="1"/>
</dbReference>
<dbReference type="Pfam" id="PF05384">
    <property type="entry name" value="DegS"/>
    <property type="match status" value="1"/>
</dbReference>
<dbReference type="Pfam" id="PF02518">
    <property type="entry name" value="HATPase_c"/>
    <property type="match status" value="1"/>
</dbReference>
<dbReference type="Pfam" id="PF07730">
    <property type="entry name" value="HisKA_3"/>
    <property type="match status" value="1"/>
</dbReference>
<dbReference type="PIRSF" id="PIRSF003169">
    <property type="entry name" value="STHK_DegS"/>
    <property type="match status" value="1"/>
</dbReference>
<dbReference type="SMART" id="SM00387">
    <property type="entry name" value="HATPase_c"/>
    <property type="match status" value="1"/>
</dbReference>
<dbReference type="SUPFAM" id="SSF55874">
    <property type="entry name" value="ATPase domain of HSP90 chaperone/DNA topoisomerase II/histidine kinase"/>
    <property type="match status" value="1"/>
</dbReference>
<dbReference type="PROSITE" id="PS50109">
    <property type="entry name" value="HIS_KIN"/>
    <property type="match status" value="1"/>
</dbReference>
<reference key="1">
    <citation type="journal article" date="1988" name="J. Bacteriol.">
        <title>Localization of Bacillus subtilis sacU(Hy) mutations to two linked genes with similarities to the conserved procaryotic family of two-component signalling systems.</title>
        <authorList>
            <person name="Henner D.J."/>
            <person name="Yang M."/>
            <person name="Ferrari E."/>
        </authorList>
    </citation>
    <scope>NUCLEOTIDE SEQUENCE [GENOMIC DNA]</scope>
</reference>
<reference key="2">
    <citation type="journal article" date="1988" name="J. Bacteriol.">
        <title>Deduced polypeptides encoded by the Bacillus subtilis sacU locus share homology with two-component sensor-regulator systems.</title>
        <authorList>
            <person name="Kunst F."/>
            <person name="Debarbouille M."/>
            <person name="Msadek T."/>
            <person name="Young M."/>
            <person name="Maueel C."/>
            <person name="Karamata D."/>
            <person name="Klier A."/>
            <person name="Rapoport G."/>
            <person name="Dedonder R."/>
        </authorList>
    </citation>
    <scope>NUCLEOTIDE SEQUENCE [GENOMIC DNA]</scope>
</reference>
<reference key="3">
    <citation type="journal article" date="1996" name="Microbiology">
        <title>Sequence of the 305 degrees-307 degrees region of the Bacillus subtilis chromosome.</title>
        <authorList>
            <person name="Soldo B."/>
            <person name="Lazarevic V."/>
            <person name="Mauel C."/>
            <person name="Karamata D."/>
        </authorList>
    </citation>
    <scope>NUCLEOTIDE SEQUENCE [GENOMIC DNA]</scope>
    <source>
        <strain>168</strain>
    </source>
</reference>
<reference key="4">
    <citation type="journal article" date="1997" name="Nature">
        <title>The complete genome sequence of the Gram-positive bacterium Bacillus subtilis.</title>
        <authorList>
            <person name="Kunst F."/>
            <person name="Ogasawara N."/>
            <person name="Moszer I."/>
            <person name="Albertini A.M."/>
            <person name="Alloni G."/>
            <person name="Azevedo V."/>
            <person name="Bertero M.G."/>
            <person name="Bessieres P."/>
            <person name="Bolotin A."/>
            <person name="Borchert S."/>
            <person name="Borriss R."/>
            <person name="Boursier L."/>
            <person name="Brans A."/>
            <person name="Braun M."/>
            <person name="Brignell S.C."/>
            <person name="Bron S."/>
            <person name="Brouillet S."/>
            <person name="Bruschi C.V."/>
            <person name="Caldwell B."/>
            <person name="Capuano V."/>
            <person name="Carter N.M."/>
            <person name="Choi S.-K."/>
            <person name="Codani J.-J."/>
            <person name="Connerton I.F."/>
            <person name="Cummings N.J."/>
            <person name="Daniel R.A."/>
            <person name="Denizot F."/>
            <person name="Devine K.M."/>
            <person name="Duesterhoeft A."/>
            <person name="Ehrlich S.D."/>
            <person name="Emmerson P.T."/>
            <person name="Entian K.-D."/>
            <person name="Errington J."/>
            <person name="Fabret C."/>
            <person name="Ferrari E."/>
            <person name="Foulger D."/>
            <person name="Fritz C."/>
            <person name="Fujita M."/>
            <person name="Fujita Y."/>
            <person name="Fuma S."/>
            <person name="Galizzi A."/>
            <person name="Galleron N."/>
            <person name="Ghim S.-Y."/>
            <person name="Glaser P."/>
            <person name="Goffeau A."/>
            <person name="Golightly E.J."/>
            <person name="Grandi G."/>
            <person name="Guiseppi G."/>
            <person name="Guy B.J."/>
            <person name="Haga K."/>
            <person name="Haiech J."/>
            <person name="Harwood C.R."/>
            <person name="Henaut A."/>
            <person name="Hilbert H."/>
            <person name="Holsappel S."/>
            <person name="Hosono S."/>
            <person name="Hullo M.-F."/>
            <person name="Itaya M."/>
            <person name="Jones L.-M."/>
            <person name="Joris B."/>
            <person name="Karamata D."/>
            <person name="Kasahara Y."/>
            <person name="Klaerr-Blanchard M."/>
            <person name="Klein C."/>
            <person name="Kobayashi Y."/>
            <person name="Koetter P."/>
            <person name="Koningstein G."/>
            <person name="Krogh S."/>
            <person name="Kumano M."/>
            <person name="Kurita K."/>
            <person name="Lapidus A."/>
            <person name="Lardinois S."/>
            <person name="Lauber J."/>
            <person name="Lazarevic V."/>
            <person name="Lee S.-M."/>
            <person name="Levine A."/>
            <person name="Liu H."/>
            <person name="Masuda S."/>
            <person name="Mauel C."/>
            <person name="Medigue C."/>
            <person name="Medina N."/>
            <person name="Mellado R.P."/>
            <person name="Mizuno M."/>
            <person name="Moestl D."/>
            <person name="Nakai S."/>
            <person name="Noback M."/>
            <person name="Noone D."/>
            <person name="O'Reilly M."/>
            <person name="Ogawa K."/>
            <person name="Ogiwara A."/>
            <person name="Oudega B."/>
            <person name="Park S.-H."/>
            <person name="Parro V."/>
            <person name="Pohl T.M."/>
            <person name="Portetelle D."/>
            <person name="Porwollik S."/>
            <person name="Prescott A.M."/>
            <person name="Presecan E."/>
            <person name="Pujic P."/>
            <person name="Purnelle B."/>
            <person name="Rapoport G."/>
            <person name="Rey M."/>
            <person name="Reynolds S."/>
            <person name="Rieger M."/>
            <person name="Rivolta C."/>
            <person name="Rocha E."/>
            <person name="Roche B."/>
            <person name="Rose M."/>
            <person name="Sadaie Y."/>
            <person name="Sato T."/>
            <person name="Scanlan E."/>
            <person name="Schleich S."/>
            <person name="Schroeter R."/>
            <person name="Scoffone F."/>
            <person name="Sekiguchi J."/>
            <person name="Sekowska A."/>
            <person name="Seror S.J."/>
            <person name="Serror P."/>
            <person name="Shin B.-S."/>
            <person name="Soldo B."/>
            <person name="Sorokin A."/>
            <person name="Tacconi E."/>
            <person name="Takagi T."/>
            <person name="Takahashi H."/>
            <person name="Takemaru K."/>
            <person name="Takeuchi M."/>
            <person name="Tamakoshi A."/>
            <person name="Tanaka T."/>
            <person name="Terpstra P."/>
            <person name="Tognoni A."/>
            <person name="Tosato V."/>
            <person name="Uchiyama S."/>
            <person name="Vandenbol M."/>
            <person name="Vannier F."/>
            <person name="Vassarotti A."/>
            <person name="Viari A."/>
            <person name="Wambutt R."/>
            <person name="Wedler E."/>
            <person name="Wedler H."/>
            <person name="Weitzenegger T."/>
            <person name="Winters P."/>
            <person name="Wipat A."/>
            <person name="Yamamoto H."/>
            <person name="Yamane K."/>
            <person name="Yasumoto K."/>
            <person name="Yata K."/>
            <person name="Yoshida K."/>
            <person name="Yoshikawa H.-F."/>
            <person name="Zumstein E."/>
            <person name="Yoshikawa H."/>
            <person name="Danchin A."/>
        </authorList>
    </citation>
    <scope>NUCLEOTIDE SEQUENCE [LARGE SCALE GENOMIC DNA]</scope>
    <source>
        <strain>168</strain>
    </source>
</reference>
<reference key="5">
    <citation type="journal article" date="1988" name="J. Bacteriol.">
        <title>Cloning and characterization of Bacillus subtilis iep, which has positive and negative effects on production of extracellular proteases.</title>
        <authorList>
            <person name="Tanaka T."/>
            <person name="Kawata M."/>
        </authorList>
    </citation>
    <scope>NUCLEOTIDE SEQUENCE [GENOMIC DNA] OF 253-385</scope>
    <source>
        <strain>168</strain>
    </source>
</reference>
<reference key="6">
    <citation type="journal article" date="1990" name="J. Biol. Chem.">
        <title>Isolation and phosphorylation of the Bacillus subtilis degS and degU gene products.</title>
        <authorList>
            <person name="Mukai K."/>
            <person name="Kawata M."/>
            <person name="Tanaka T."/>
        </authorList>
    </citation>
    <scope>FUNCTION</scope>
    <scope>AUTOPHOSPHORYLATION</scope>
    <source>
        <strain>168 / CU741</strain>
    </source>
</reference>
<reference key="7">
    <citation type="journal article" date="1991" name="J. Bacteriol.">
        <title>Mutational analysis of the Bacillus subtilis DegU regulator and its phosphorylation by the DegS protein kinase.</title>
        <authorList>
            <person name="Dahl M.K."/>
            <person name="Msadek T."/>
            <person name="Kunst F."/>
            <person name="Rapoport G."/>
        </authorList>
    </citation>
    <scope>FUNCTION</scope>
    <scope>AUTOPHOSPHORYLATION</scope>
    <source>
        <strain>168</strain>
    </source>
</reference>
<reference key="8">
    <citation type="journal article" date="1991" name="J. Bacteriol.">
        <title>Altered phosphorylation of Bacillus subtilis DegU caused by single amino acid changes in DegS.</title>
        <authorList>
            <person name="Tanaka T."/>
            <person name="Kawata M."/>
            <person name="Mukai K."/>
        </authorList>
    </citation>
    <scope>FUNCTION AS A KINASE AND A PHOSPHATASE</scope>
    <scope>MUTAGENESIS OF GLY-218</scope>
</reference>
<reference key="9">
    <citation type="journal article" date="1992" name="J. Biol. Chem.">
        <title>The phosphorylation state of the DegU response regulator acts as a molecular switch allowing either degradative enzyme synthesis or expression of genetic competence in Bacillus subtilis.</title>
        <authorList>
            <person name="Dahl M.K."/>
            <person name="Msadek T."/>
            <person name="Kunst F."/>
            <person name="Rapoport G."/>
        </authorList>
    </citation>
    <scope>FUNCTION AS A KINASE AND A PHOSPHATASE</scope>
    <scope>MUTAGENESIS OF ALA-193 AND GLY-218</scope>
</reference>
<reference key="10">
    <citation type="journal article" date="2002" name="Mol. Genet. Genomics">
        <title>Bacillus subtilis functional genomics: genome-wide analysis of the DegS-DegU regulon by transcriptomics and proteomics.</title>
        <authorList>
            <person name="Mader U."/>
            <person name="Antelmann H."/>
            <person name="Buder T."/>
            <person name="Dahl M.K."/>
            <person name="Hecker M."/>
            <person name="Homuth G."/>
        </authorList>
    </citation>
    <scope>FUNCTION</scope>
</reference>
<reference key="11">
    <citation type="journal article" date="2007" name="Mol. Cell. Proteomics">
        <title>The serine/threonine/tyrosine phosphoproteome of the model bacterium Bacillus subtilis.</title>
        <authorList>
            <person name="Macek B."/>
            <person name="Mijakovic I."/>
            <person name="Olsen J.V."/>
            <person name="Gnad F."/>
            <person name="Kumar C."/>
            <person name="Jensen P.R."/>
            <person name="Mann M."/>
        </authorList>
    </citation>
    <scope>PHOSPHORYLATION [LARGE SCALE ANALYSIS] AT SER-76</scope>
    <scope>IDENTIFICATION BY MASS SPECTROMETRY</scope>
    <source>
        <strain>168</strain>
    </source>
</reference>
<reference key="12">
    <citation type="journal article" date="2007" name="Mol. Microbiol.">
        <title>Gradual activation of the response regulator DegU controls serial expression of genes for flagellum formation and biofilm formation in Bacillus subtilis.</title>
        <authorList>
            <person name="Kobayashi K."/>
        </authorList>
    </citation>
    <scope>FUNCTION</scope>
    <scope>ACTIVITY REGULATION</scope>
</reference>
<reference key="13">
    <citation type="journal article" date="2011" name="PLoS ONE">
        <title>Bacillus subtilis two-component system sensory kinase DegS is regulated by serine phosphorylation in its input domain.</title>
        <authorList>
            <person name="Jers C."/>
            <person name="Kobir A."/>
            <person name="Sondergaard E.O."/>
            <person name="Jensen P.R."/>
            <person name="Mijakovic I."/>
        </authorList>
    </citation>
    <scope>ACTIVITY REGULATION</scope>
    <scope>PHOSPHORYLATION AT SER-76</scope>
    <scope>MUTAGENESIS OF SER-76</scope>
</reference>
<comment type="function">
    <text evidence="3 4 6 7 8 9">Member of the two-component regulatory system DegS/DegU, which plays an important role in the transition growth phase. Involved in the control of expression of different cellular functions, including production of degradative enzymes such as the neutral and alkaline proteases, flagellum formation and biofilm formation. Acts both as a protein kinase that undergoes autophosphorylation and subsequently transfers the phosphate to DegU, and as a protein phosphatase that dephosphorylates phospho-DegU.</text>
</comment>
<comment type="catalytic activity">
    <reaction>
        <text>ATP + protein L-histidine = ADP + protein N-phospho-L-histidine.</text>
        <dbReference type="EC" id="2.7.13.3"/>
    </reaction>
</comment>
<comment type="activity regulation">
    <text evidence="6 10">Regulated via serine phosphorylation of its input domain. Phosphotransfer from DegS to DegU is stimulated by phosphorylation on Ser-76 and by DegQ.</text>
</comment>
<comment type="subcellular location">
    <subcellularLocation>
        <location evidence="11">Cytoplasm</location>
    </subcellularLocation>
</comment>
<comment type="PTM">
    <text evidence="5 10">Autophosphorylated. Phosphorylated in vitro at Ser-76 by the serine/threonine-protein kinase YbdM, which stimulates the phosphate transfer to DegU.</text>
</comment>